<evidence type="ECO:0000250" key="1">
    <source>
        <dbReference type="UniProtKB" id="Q7Z591"/>
    </source>
</evidence>
<evidence type="ECO:0000256" key="2">
    <source>
        <dbReference type="SAM" id="MobiDB-lite"/>
    </source>
</evidence>
<evidence type="ECO:0000269" key="3">
    <source>
    </source>
</evidence>
<evidence type="ECO:0000269" key="4">
    <source>
    </source>
</evidence>
<evidence type="ECO:0000303" key="5">
    <source>
    </source>
</evidence>
<evidence type="ECO:0000303" key="6">
    <source>
    </source>
</evidence>
<evidence type="ECO:0000303" key="7">
    <source>
    </source>
</evidence>
<evidence type="ECO:0000305" key="8"/>
<evidence type="ECO:0000312" key="9">
    <source>
        <dbReference type="MGI" id="MGI:2140340"/>
    </source>
</evidence>
<evidence type="ECO:0007744" key="10">
    <source>
    </source>
</evidence>
<protein>
    <recommendedName>
        <fullName evidence="8">Microtubule organization protein AKNA</fullName>
    </recommendedName>
    <alternativeName>
        <fullName evidence="8">AT-hook-containing transcription factor</fullName>
    </alternativeName>
</protein>
<proteinExistence type="evidence at protein level"/>
<sequence length="1404" mass="153123">MASSGAKAQWVGPSLGQGPRRRRWAWAEEQDTDGRRDQGWGNSQSLPEAPSPELLEDFRRAQEHLPPLEWDPDMQDSEESSGEETEADDASSPEGSTVPLPWLSRSNQQLDMSEEELDEASGRPEVDLAGESCTELECEDQGDSSPPPPGQGPAKGWVTFIKQGSNYRPSEHLEAQPSVEHSRTKSWSSGTVSLRQPSDSLGSTWEGDTEVPQPSILPKALPQSPCHNFPHPGDRNGGDVAPATPTEFRDSLAAPAQNAECSAGTWGEETTSLPSSRPEDQTWKRTKTSPKPLPSRFTGSVSPLSTRLGAIKKVVPQHKQGATLAGHSSSQAPKYGRGRRLNYPLPDFSKVGPRVRFPKDENYRPPKSRGHNRQQGSTRPLIFKSPAEIVRDVLLSSGEASLAKESSLAHTITRVPQEFQTPEQATELVHQLQEDYHKLLTKYAEAENTIDQLRLGAKVHLYSDPPQPSQSFCSGSMPQGSKVLSFSIPQPRVAEWWPDPAQDPQASEATGWPFPRTDLSPSSSPGVATPGRLPQSQGIATDQPSTGQTQALTSQASRLLAKVQSFEELVLAGHLPPQDQIKSLEQLRAAHMALEAEYLQACREELLDPQLDASQGSPRTLNLCRELEAEIYHLGQRLEELQDHMDQTQRETEPCRPDLQDSTPTMSFLPQSAHLSMPSGPVSLPDGQTYQEPATTTTTSPGSSCTLPINKKLSLSIKTEESPRGLPVPLRDRTLQVEQDFHGLLERYLSVKSLPEALRDEDEDDLEEEEEEQDHQGPLEVDSPATAPGKTEAVRVPPGERPTQAEESHRDATQEDEEQMGPMKSPDFRPSMARDTYTPVLDTAEVAQRGTKAMVSHQSSLTSLEESRPSELLPRKALLRAGGPHTEEPWMVSPETDSGFVGSETSIVSPFTQTPEHRLSHVSTSGPSAQHLTASVPGDRTSHPKARGLMVPRRATETGIPRSRTQQHFSSLSSPGRGAQSCHLEETSVAKIAVPRSEFKRQKQISKQLLPSGRTSPDSAPAPTAASTPHGSAESTANLLLNRTERDQAIKDLQAEVSRLRLQLEDSLHRPHPDGPACVASAFNHSTQTQEKLGSSPSWGPHYGSKSTERLSREPNGVEPAEPMGRRRARSSSVPRDVPRLYLSSESESPAPRLSSEKSRTFEEHPEAAQWGTRPQSSSKRRERVSFRGQYTGQEYHILSPKAILKDSGTPSCPHCHPIRTQDTGSAVSRDTTRGSSAADTLRCALCGEVKSSAEADGSSSGPSEKNTPKKPSTPILKRKNRQTGSPVRMAPGLWYLAAAPPAPAPPALAYISSAPIMPYLPPTVYYAAPAPTSAQTASPQPARGPRRTRHSVQLGLNDLEELQAALREAAQAAENVRSTTRQLSRSLSADLRHARSLRGSCLF</sequence>
<feature type="chain" id="PRO_0000289160" description="Microtubule organization protein AKNA">
    <location>
        <begin position="1"/>
        <end position="1404"/>
    </location>
</feature>
<feature type="DNA-binding region" description="A.T hook">
    <location>
        <begin position="1088"/>
        <end position="1096"/>
    </location>
</feature>
<feature type="region of interest" description="Disordered" evidence="2">
    <location>
        <begin position="1"/>
        <end position="304"/>
    </location>
</feature>
<feature type="region of interest" description="Disordered" evidence="2">
    <location>
        <begin position="317"/>
        <end position="382"/>
    </location>
</feature>
<feature type="region of interest" description="Disordered" evidence="2">
    <location>
        <begin position="494"/>
        <end position="549"/>
    </location>
</feature>
<feature type="region of interest" description="Disordered" evidence="2">
    <location>
        <begin position="645"/>
        <end position="708"/>
    </location>
</feature>
<feature type="region of interest" description="PEST">
    <location>
        <begin position="754"/>
        <end position="787"/>
    </location>
</feature>
<feature type="region of interest" description="Disordered" evidence="2">
    <location>
        <begin position="755"/>
        <end position="1038"/>
    </location>
</feature>
<feature type="region of interest" description="PEST">
    <location>
        <begin position="885"/>
        <end position="906"/>
    </location>
</feature>
<feature type="region of interest" description="Disordered" evidence="2">
    <location>
        <begin position="1085"/>
        <end position="1185"/>
    </location>
</feature>
<feature type="region of interest" description="Disordered" evidence="2">
    <location>
        <begin position="1208"/>
        <end position="1235"/>
    </location>
</feature>
<feature type="region of interest" description="Disordered" evidence="2">
    <location>
        <begin position="1253"/>
        <end position="1286"/>
    </location>
</feature>
<feature type="compositionally biased region" description="Acidic residues" evidence="2">
    <location>
        <begin position="70"/>
        <end position="91"/>
    </location>
</feature>
<feature type="compositionally biased region" description="Polar residues" evidence="2">
    <location>
        <begin position="185"/>
        <end position="203"/>
    </location>
</feature>
<feature type="compositionally biased region" description="Polar residues" evidence="2">
    <location>
        <begin position="534"/>
        <end position="549"/>
    </location>
</feature>
<feature type="compositionally biased region" description="Basic and acidic residues" evidence="2">
    <location>
        <begin position="645"/>
        <end position="659"/>
    </location>
</feature>
<feature type="compositionally biased region" description="Polar residues" evidence="2">
    <location>
        <begin position="660"/>
        <end position="674"/>
    </location>
</feature>
<feature type="compositionally biased region" description="Polar residues" evidence="2">
    <location>
        <begin position="686"/>
        <end position="707"/>
    </location>
</feature>
<feature type="compositionally biased region" description="Acidic residues" evidence="2">
    <location>
        <begin position="759"/>
        <end position="773"/>
    </location>
</feature>
<feature type="compositionally biased region" description="Basic and acidic residues" evidence="2">
    <location>
        <begin position="803"/>
        <end position="813"/>
    </location>
</feature>
<feature type="compositionally biased region" description="Polar residues" evidence="2">
    <location>
        <begin position="903"/>
        <end position="914"/>
    </location>
</feature>
<feature type="compositionally biased region" description="Polar residues" evidence="2">
    <location>
        <begin position="921"/>
        <end position="933"/>
    </location>
</feature>
<feature type="compositionally biased region" description="Polar residues" evidence="2">
    <location>
        <begin position="963"/>
        <end position="974"/>
    </location>
</feature>
<feature type="compositionally biased region" description="Low complexity" evidence="2">
    <location>
        <begin position="1015"/>
        <end position="1029"/>
    </location>
</feature>
<feature type="compositionally biased region" description="Polar residues" evidence="2">
    <location>
        <begin position="1085"/>
        <end position="1098"/>
    </location>
</feature>
<feature type="compositionally biased region" description="Basic and acidic residues" evidence="2">
    <location>
        <begin position="1155"/>
        <end position="1167"/>
    </location>
</feature>
<feature type="compositionally biased region" description="Polar residues" evidence="2">
    <location>
        <begin position="1221"/>
        <end position="1235"/>
    </location>
</feature>
<feature type="modified residue" description="Phosphoserine" evidence="10">
    <location>
        <position position="51"/>
    </location>
</feature>
<feature type="modified residue" description="Phosphoserine" evidence="1">
    <location>
        <position position="302"/>
    </location>
</feature>
<feature type="modified residue" description="Phosphoserine" evidence="1">
    <location>
        <position position="485"/>
    </location>
</feature>
<feature type="modified residue" description="Phosphoserine" evidence="1">
    <location>
        <position position="520"/>
    </location>
</feature>
<feature type="modified residue" description="Phosphoserine" evidence="10">
    <location>
        <position position="617"/>
    </location>
</feature>
<feature type="modified residue" description="Phosphoserine" evidence="1">
    <location>
        <position position="750"/>
    </location>
</feature>
<feature type="modified residue" description="Phosphoserine" evidence="1">
    <location>
        <position position="753"/>
    </location>
</feature>
<feature type="modified residue" description="Phosphoserine" evidence="1">
    <location>
        <position position="831"/>
    </location>
</feature>
<feature type="modified residue" description="Phosphoserine" evidence="1">
    <location>
        <position position="860"/>
    </location>
</feature>
<feature type="modified residue" description="Phosphoserine" evidence="1">
    <location>
        <position position="971"/>
    </location>
</feature>
<feature type="modified residue" description="Phosphoserine" evidence="10">
    <location>
        <position position="1144"/>
    </location>
</feature>
<feature type="modified residue" description="Phosphoserine" evidence="10">
    <location>
        <position position="1145"/>
    </location>
</feature>
<feature type="modified residue" description="Phosphoserine" evidence="1">
    <location>
        <position position="1200"/>
    </location>
</feature>
<feature type="modified residue" description="Phosphoserine" evidence="1">
    <location>
        <position position="1339"/>
    </location>
</feature>
<feature type="modified residue" description="Phosphoserine" evidence="1">
    <location>
        <position position="1352"/>
    </location>
</feature>
<feature type="modified residue" description="Phosphoserine" evidence="1">
    <location>
        <position position="1389"/>
    </location>
</feature>
<feature type="splice variant" id="VSP_025941" description="In isoform 4." evidence="5">
    <location>
        <begin position="205"/>
        <end position="353"/>
    </location>
</feature>
<feature type="splice variant" id="VSP_025942" description="In isoform 2." evidence="7">
    <original>WPFPRTDLSPSSSPGVATP</original>
    <variation>ELGKEPGLLSTPLLMEGEP</variation>
    <location>
        <begin position="512"/>
        <end position="530"/>
    </location>
</feature>
<feature type="splice variant" id="VSP_025943" description="In isoform 2." evidence="7">
    <location>
        <begin position="531"/>
        <end position="1404"/>
    </location>
</feature>
<feature type="splice variant" id="VSP_025944" description="In isoform 3 and isoform 4." evidence="5 6">
    <original>SAVSRDTTRGSSAADTLRC</original>
    <variation>KRQHFVQWRLKPLPTEKFY</variation>
    <location>
        <begin position="1226"/>
        <end position="1244"/>
    </location>
</feature>
<feature type="splice variant" id="VSP_025945" description="In isoform 3 and isoform 4." evidence="5 6">
    <location>
        <begin position="1245"/>
        <end position="1404"/>
    </location>
</feature>
<feature type="sequence conflict" description="In Ref. 2; BAE32751." evidence="8" ref="2">
    <original>S</original>
    <variation>R</variation>
    <location>
        <position position="396"/>
    </location>
</feature>
<feature type="sequence conflict" description="In Ref. 1; BAC98278." evidence="8" ref="1">
    <original>V</original>
    <variation>M</variation>
    <location>
        <position position="527"/>
    </location>
</feature>
<feature type="sequence conflict" description="In Ref. 1; BAC98278." evidence="8" ref="1">
    <original>P</original>
    <variation>S</variation>
    <location>
        <position position="534"/>
    </location>
</feature>
<feature type="sequence conflict" description="In Ref. 1; BAC98278." evidence="8" ref="1">
    <original>R</original>
    <variation>Q</variation>
    <location>
        <position position="558"/>
    </location>
</feature>
<feature type="sequence conflict" description="In Ref. 1; BAC98278." evidence="8" ref="1">
    <original>K</original>
    <variation>E</variation>
    <location>
        <position position="712"/>
    </location>
</feature>
<feature type="sequence conflict" description="In Ref. 1; BAC98278 and 4; AAH25835." evidence="8" ref="1 4">
    <location>
        <begin position="928"/>
        <end position="929"/>
    </location>
</feature>
<feature type="sequence conflict" description="In Ref. 1; BAC98278 and 4; AAH25835." evidence="8" ref="1 4">
    <original>P</original>
    <variation>S</variation>
    <location>
        <position position="944"/>
    </location>
</feature>
<feature type="sequence conflict" description="In Ref. 1; BAC98278 and 4; AAH25835." evidence="8" ref="1 4">
    <original>TET</original>
    <variation>IEA</variation>
    <location>
        <begin position="956"/>
        <end position="958"/>
    </location>
</feature>
<feature type="sequence conflict" description="In Ref. 1; BAC98278 and 4; AAH25835." evidence="8" ref="1 4">
    <original>S</original>
    <variation>T</variation>
    <location>
        <position position="963"/>
    </location>
</feature>
<feature type="sequence conflict" description="In Ref. 1; BAC98278 and 4; AAH25835." evidence="8" ref="1 4">
    <original>QHF</original>
    <variation>RHL</variation>
    <location>
        <begin position="967"/>
        <end position="969"/>
    </location>
</feature>
<feature type="sequence conflict" description="In Ref. 1; BAC98278 and 4; AAH25835." evidence="8" ref="1 4">
    <original>R</original>
    <variation>G</variation>
    <location>
        <position position="1113"/>
    </location>
</feature>
<feature type="sequence conflict" description="In Ref. 1; BAC98278 and 4; AAH25835." evidence="8" ref="1 4">
    <original>P</original>
    <variation>S</variation>
    <location>
        <position position="1166"/>
    </location>
</feature>
<feature type="sequence conflict" description="In Ref. 1; BAC98278 and 4; AAH25835." evidence="8" ref="1 4">
    <original>P</original>
    <variation>L</variation>
    <location>
        <position position="1211"/>
    </location>
</feature>
<comment type="function">
    <text evidence="1 4 8">Centrosomal protein that plays a key role in cell delamination by regulating microtubule organization (PubMed:30787442). Required for the delamination and retention of neural stem cells from the subventricular zone during neurogenesis (PubMed:30787442). Also regulates the epithelial-to-mesenchymal transition in other epithelial cells (PubMed:30787442). Acts by increasing centrosomal microtubule nucleation and recruiting nucleation factors and minus-end stabilizers, thereby destabilizing microtubules at the adherens junctions and mediating constriction of the apical endfoot (PubMed:30787442). In addition, may also act as a transcription factor that specifically activates the expression of the CD40 receptor and its ligand CD40L/CD154, two cell surface molecules on lymphocytes that are critical for antigen-dependent-B-cell development (By similarity). Binds to A/T-rich promoters (By similarity). It is unclear how it can both act as a microtubule organizer and as a transcription factor; additional evidences are required to reconcile these two apparently contradictory functions (Probable).</text>
</comment>
<comment type="subunit">
    <text evidence="4">Interacts with DCTN1 (PubMed:30787442). Interacts with MAPRE1/EB1 (PubMed:30787442). Interacts with ODF2 (PubMed:30787442). Interacts with CAMSAP3 (PubMed:30787442).</text>
</comment>
<comment type="subcellular location">
    <subcellularLocation>
        <location evidence="4">Cytoplasm</location>
        <location evidence="4">Cytoskeleton</location>
        <location evidence="4">Microtubule organizing center</location>
        <location evidence="4">Centrosome</location>
        <location evidence="4">Centriole</location>
    </subcellularLocation>
    <subcellularLocation>
        <location evidence="1">Nucleus</location>
    </subcellularLocation>
    <text evidence="4">Localizes to the distal part of the subdistal appendages of the mother centriole in interphase (PubMed:30787442). Also found at the proximal ends of centrioles and along microtubules (PubMed:30787442). The centrosomal localization is dependent on centrioles (PubMed:30787442). Dissociates from centrosomes during M-phase without proteolytic degradation and reassembles at the centrosomes during late telophase and early G1 phase (PubMed:30787442). Dissociation and reassembly is regulated by phosphorylation (PubMed:30787442).</text>
</comment>
<comment type="alternative products">
    <event type="alternative splicing"/>
    <isoform>
        <id>Q80VW7-1</id>
        <name>1</name>
        <sequence type="displayed"/>
    </isoform>
    <isoform>
        <id>Q80VW7-2</id>
        <name>2</name>
        <sequence type="described" ref="VSP_025942 VSP_025943"/>
    </isoform>
    <isoform>
        <id>Q80VW7-3</id>
        <name>3</name>
        <sequence type="described" ref="VSP_025944 VSP_025945"/>
    </isoform>
    <isoform>
        <id>Q80VW7-4</id>
        <name>4</name>
        <sequence type="described" ref="VSP_025941 VSP_025944 VSP_025945"/>
    </isoform>
</comment>
<comment type="tissue specificity">
    <text evidence="4">Expressed in neural stem cells isolated at the peak of subventricular zone (SVZ): localizes at the subdistal appendages of the mother centriole in specific subtypes of neural stem cells and in almost all basal progenitors.</text>
</comment>
<comment type="developmental stage">
    <text evidence="4">During development, expressed when the subventricular zone (SVZ) is generated (low at 11 dpc, high at 14 dpc and low at 18 dpc).</text>
</comment>
<comment type="PTM">
    <text evidence="4">Phosphorylated; phosphorylation regulates dissociation from and reassembly at the centrosome.</text>
</comment>
<comment type="disruption phenotype">
    <text evidence="3">Neonatal lethality: mice fail to thrive and most of them die by postnatal day 10 (PubMed:21606955). Mice display systemic inflammation, predominantly in the lungs, accompanied by enhanced leukocyte infiltration and alveolar destruction (PubMed:21606955).</text>
</comment>
<comment type="similarity">
    <text evidence="8">Belongs to the AKNA family.</text>
</comment>
<comment type="sequence caution" evidence="8">
    <conflict type="erroneous initiation">
        <sequence resource="EMBL-CDS" id="BAC98278"/>
    </conflict>
</comment>
<dbReference type="EMBL" id="AK129468">
    <property type="protein sequence ID" value="BAC98278.1"/>
    <property type="status" value="ALT_INIT"/>
    <property type="molecule type" value="mRNA"/>
</dbReference>
<dbReference type="EMBL" id="AK154663">
    <property type="protein sequence ID" value="BAE32751.1"/>
    <property type="molecule type" value="mRNA"/>
</dbReference>
<dbReference type="EMBL" id="AK170121">
    <property type="protein sequence ID" value="BAE41578.1"/>
    <property type="molecule type" value="mRNA"/>
</dbReference>
<dbReference type="EMBL" id="AK170885">
    <property type="protein sequence ID" value="BAE42093.1"/>
    <property type="molecule type" value="mRNA"/>
</dbReference>
<dbReference type="EMBL" id="AL683828">
    <property type="status" value="NOT_ANNOTATED_CDS"/>
    <property type="molecule type" value="Genomic_DNA"/>
</dbReference>
<dbReference type="EMBL" id="BC025835">
    <property type="protein sequence ID" value="AAH25835.1"/>
    <property type="molecule type" value="mRNA"/>
</dbReference>
<dbReference type="EMBL" id="BC036324">
    <property type="protein sequence ID" value="AAH36324.1"/>
    <property type="molecule type" value="mRNA"/>
</dbReference>
<dbReference type="EMBL" id="BC092227">
    <property type="protein sequence ID" value="AAH92227.1"/>
    <property type="molecule type" value="mRNA"/>
</dbReference>
<dbReference type="CCDS" id="CCDS38777.1">
    <molecule id="Q80VW7-1"/>
</dbReference>
<dbReference type="RefSeq" id="NP_001038979.1">
    <molecule id="Q80VW7-1"/>
    <property type="nucleotide sequence ID" value="NM_001045514.4"/>
</dbReference>
<dbReference type="RefSeq" id="NP_001292361.1">
    <molecule id="Q80VW7-1"/>
    <property type="nucleotide sequence ID" value="NM_001305432.2"/>
</dbReference>
<dbReference type="RefSeq" id="NP_001413072.1">
    <molecule id="Q80VW7-1"/>
    <property type="nucleotide sequence ID" value="NM_001426143.1"/>
</dbReference>
<dbReference type="RefSeq" id="NP_001413073.1">
    <molecule id="Q80VW7-1"/>
    <property type="nucleotide sequence ID" value="NM_001426144.1"/>
</dbReference>
<dbReference type="RefSeq" id="NP_001413074.1">
    <molecule id="Q80VW7-1"/>
    <property type="nucleotide sequence ID" value="NM_001426145.1"/>
</dbReference>
<dbReference type="RefSeq" id="NP_001413075.1">
    <molecule id="Q80VW7-1"/>
    <property type="nucleotide sequence ID" value="NM_001426146.1"/>
</dbReference>
<dbReference type="RefSeq" id="NP_001413076.1">
    <molecule id="Q80VW7-1"/>
    <property type="nucleotide sequence ID" value="NM_001426147.1"/>
</dbReference>
<dbReference type="RefSeq" id="NP_001413077.1">
    <molecule id="Q80VW7-1"/>
    <property type="nucleotide sequence ID" value="NM_001426148.1"/>
</dbReference>
<dbReference type="RefSeq" id="XP_006537583.1">
    <property type="nucleotide sequence ID" value="XM_006537520.3"/>
</dbReference>
<dbReference type="RefSeq" id="XP_006537584.1">
    <property type="nucleotide sequence ID" value="XM_006537521.2"/>
</dbReference>
<dbReference type="RefSeq" id="XP_006537585.1">
    <property type="nucleotide sequence ID" value="XM_006537522.3"/>
</dbReference>
<dbReference type="SMR" id="Q80VW7"/>
<dbReference type="FunCoup" id="Q80VW7">
    <property type="interactions" value="1301"/>
</dbReference>
<dbReference type="STRING" id="10090.ENSMUSP00000041614"/>
<dbReference type="MoonProt" id="Q80VW7"/>
<dbReference type="GlyGen" id="Q80VW7">
    <property type="glycosylation" value="3 sites"/>
</dbReference>
<dbReference type="iPTMnet" id="Q80VW7"/>
<dbReference type="PhosphoSitePlus" id="Q80VW7"/>
<dbReference type="jPOST" id="Q80VW7"/>
<dbReference type="PaxDb" id="10090-ENSMUSP00000041614"/>
<dbReference type="PeptideAtlas" id="Q80VW7"/>
<dbReference type="ProteomicsDB" id="296154">
    <molecule id="Q80VW7-1"/>
</dbReference>
<dbReference type="ProteomicsDB" id="296155">
    <molecule id="Q80VW7-2"/>
</dbReference>
<dbReference type="ProteomicsDB" id="296156">
    <molecule id="Q80VW7-3"/>
</dbReference>
<dbReference type="ProteomicsDB" id="296157">
    <molecule id="Q80VW7-4"/>
</dbReference>
<dbReference type="Antibodypedia" id="54667">
    <property type="antibodies" value="40 antibodies from 13 providers"/>
</dbReference>
<dbReference type="Ensembl" id="ENSMUST00000035724.5">
    <molecule id="Q80VW7-1"/>
    <property type="protein sequence ID" value="ENSMUSP00000041614.5"/>
    <property type="gene ID" value="ENSMUSG00000039158.12"/>
</dbReference>
<dbReference type="GeneID" id="100182"/>
<dbReference type="KEGG" id="mmu:100182"/>
<dbReference type="UCSC" id="uc008tgb.3">
    <molecule id="Q80VW7-1"/>
    <property type="organism name" value="mouse"/>
</dbReference>
<dbReference type="UCSC" id="uc008tge.2">
    <molecule id="Q80VW7-2"/>
    <property type="organism name" value="mouse"/>
</dbReference>
<dbReference type="AGR" id="MGI:2140340"/>
<dbReference type="CTD" id="80709"/>
<dbReference type="MGI" id="MGI:2140340">
    <property type="gene designation" value="Akna"/>
</dbReference>
<dbReference type="VEuPathDB" id="HostDB:ENSMUSG00000039158"/>
<dbReference type="eggNOG" id="ENOG502QRSN">
    <property type="taxonomic scope" value="Eukaryota"/>
</dbReference>
<dbReference type="GeneTree" id="ENSGT00940000154254"/>
<dbReference type="HOGENOM" id="CLU_005641_0_0_1"/>
<dbReference type="InParanoid" id="Q80VW7"/>
<dbReference type="OMA" id="PHLAMTE"/>
<dbReference type="OrthoDB" id="10035553at2759"/>
<dbReference type="PhylomeDB" id="Q80VW7"/>
<dbReference type="TreeFam" id="TF336885"/>
<dbReference type="BioGRID-ORCS" id="100182">
    <property type="hits" value="2 hits in 60 CRISPR screens"/>
</dbReference>
<dbReference type="PRO" id="PR:Q80VW7"/>
<dbReference type="Proteomes" id="UP000000589">
    <property type="component" value="Chromosome 4"/>
</dbReference>
<dbReference type="RNAct" id="Q80VW7">
    <property type="molecule type" value="protein"/>
</dbReference>
<dbReference type="Bgee" id="ENSMUSG00000039158">
    <property type="expression patterns" value="Expressed in granulocyte and 209 other cell types or tissues"/>
</dbReference>
<dbReference type="GO" id="GO:0005814">
    <property type="term" value="C:centriole"/>
    <property type="evidence" value="ECO:0000314"/>
    <property type="project" value="UniProtKB"/>
</dbReference>
<dbReference type="GO" id="GO:0005813">
    <property type="term" value="C:centrosome"/>
    <property type="evidence" value="ECO:0000314"/>
    <property type="project" value="UniProtKB"/>
</dbReference>
<dbReference type="GO" id="GO:0005829">
    <property type="term" value="C:cytosol"/>
    <property type="evidence" value="ECO:0007669"/>
    <property type="project" value="Ensembl"/>
</dbReference>
<dbReference type="GO" id="GO:0001650">
    <property type="term" value="C:fibrillar center"/>
    <property type="evidence" value="ECO:0007669"/>
    <property type="project" value="Ensembl"/>
</dbReference>
<dbReference type="GO" id="GO:0005874">
    <property type="term" value="C:microtubule"/>
    <property type="evidence" value="ECO:0000314"/>
    <property type="project" value="UniProtKB"/>
</dbReference>
<dbReference type="GO" id="GO:0005654">
    <property type="term" value="C:nucleoplasm"/>
    <property type="evidence" value="ECO:0007669"/>
    <property type="project" value="Ensembl"/>
</dbReference>
<dbReference type="GO" id="GO:0003677">
    <property type="term" value="F:DNA binding"/>
    <property type="evidence" value="ECO:0007669"/>
    <property type="project" value="UniProtKB-KW"/>
</dbReference>
<dbReference type="GO" id="GO:0060232">
    <property type="term" value="P:delamination"/>
    <property type="evidence" value="ECO:0000314"/>
    <property type="project" value="UniProtKB"/>
</dbReference>
<dbReference type="GO" id="GO:0001837">
    <property type="term" value="P:epithelial to mesenchymal transition"/>
    <property type="evidence" value="ECO:0000314"/>
    <property type="project" value="UniProtKB"/>
</dbReference>
<dbReference type="GO" id="GO:0060234">
    <property type="term" value="P:neuroblast delamination"/>
    <property type="evidence" value="ECO:0000314"/>
    <property type="project" value="UniProtKB"/>
</dbReference>
<dbReference type="GO" id="GO:0021849">
    <property type="term" value="P:neuroblast division in subventricular zone"/>
    <property type="evidence" value="ECO:0000314"/>
    <property type="project" value="UniProtKB"/>
</dbReference>
<dbReference type="GO" id="GO:0045944">
    <property type="term" value="P:positive regulation of transcription by RNA polymerase II"/>
    <property type="evidence" value="ECO:0007669"/>
    <property type="project" value="Ensembl"/>
</dbReference>
<dbReference type="GO" id="GO:0050727">
    <property type="term" value="P:regulation of inflammatory response"/>
    <property type="evidence" value="ECO:0000315"/>
    <property type="project" value="UniProtKB"/>
</dbReference>
<dbReference type="InterPro" id="IPR052655">
    <property type="entry name" value="AKNA_Centrosome-Trans_reg"/>
</dbReference>
<dbReference type="InterPro" id="IPR022150">
    <property type="entry name" value="AKNA_dom"/>
</dbReference>
<dbReference type="PANTHER" id="PTHR21510">
    <property type="entry name" value="AKNA DOMAIN-CONTAINING PROTEIN"/>
    <property type="match status" value="1"/>
</dbReference>
<dbReference type="PANTHER" id="PTHR21510:SF15">
    <property type="entry name" value="MICROTUBULE ORGANIZATION PROTEIN AKNA"/>
    <property type="match status" value="1"/>
</dbReference>
<dbReference type="Pfam" id="PF12443">
    <property type="entry name" value="AKNA"/>
    <property type="match status" value="1"/>
</dbReference>
<keyword id="KW-0010">Activator</keyword>
<keyword id="KW-0025">Alternative splicing</keyword>
<keyword id="KW-0963">Cytoplasm</keyword>
<keyword id="KW-0206">Cytoskeleton</keyword>
<keyword id="KW-0238">DNA-binding</keyword>
<keyword id="KW-0493">Microtubule</keyword>
<keyword id="KW-0524">Neurogenesis</keyword>
<keyword id="KW-0539">Nucleus</keyword>
<keyword id="KW-0597">Phosphoprotein</keyword>
<keyword id="KW-1185">Reference proteome</keyword>
<keyword id="KW-0804">Transcription</keyword>
<keyword id="KW-0805">Transcription regulation</keyword>
<reference key="1">
    <citation type="journal article" date="2003" name="DNA Res.">
        <title>Prediction of the coding sequences of mouse homologues of KIAA gene: III. The complete nucleotide sequences of 500 mouse KIAA-homologous cDNAs identified by screening of terminal sequences of cDNA clones randomly sampled from size-fractionated libraries.</title>
        <authorList>
            <person name="Okazaki N."/>
            <person name="Kikuno R."/>
            <person name="Ohara R."/>
            <person name="Inamoto S."/>
            <person name="Koseki H."/>
            <person name="Hiraoka S."/>
            <person name="Saga Y."/>
            <person name="Nagase T."/>
            <person name="Ohara O."/>
            <person name="Koga H."/>
        </authorList>
    </citation>
    <scope>NUCLEOTIDE SEQUENCE [LARGE SCALE MRNA] (ISOFORM 4)</scope>
    <source>
        <tissue>Embryonic tail</tissue>
    </source>
</reference>
<reference key="2">
    <citation type="journal article" date="2005" name="Science">
        <title>The transcriptional landscape of the mammalian genome.</title>
        <authorList>
            <person name="Carninci P."/>
            <person name="Kasukawa T."/>
            <person name="Katayama S."/>
            <person name="Gough J."/>
            <person name="Frith M.C."/>
            <person name="Maeda N."/>
            <person name="Oyama R."/>
            <person name="Ravasi T."/>
            <person name="Lenhard B."/>
            <person name="Wells C."/>
            <person name="Kodzius R."/>
            <person name="Shimokawa K."/>
            <person name="Bajic V.B."/>
            <person name="Brenner S.E."/>
            <person name="Batalov S."/>
            <person name="Forrest A.R."/>
            <person name="Zavolan M."/>
            <person name="Davis M.J."/>
            <person name="Wilming L.G."/>
            <person name="Aidinis V."/>
            <person name="Allen J.E."/>
            <person name="Ambesi-Impiombato A."/>
            <person name="Apweiler R."/>
            <person name="Aturaliya R.N."/>
            <person name="Bailey T.L."/>
            <person name="Bansal M."/>
            <person name="Baxter L."/>
            <person name="Beisel K.W."/>
            <person name="Bersano T."/>
            <person name="Bono H."/>
            <person name="Chalk A.M."/>
            <person name="Chiu K.P."/>
            <person name="Choudhary V."/>
            <person name="Christoffels A."/>
            <person name="Clutterbuck D.R."/>
            <person name="Crowe M.L."/>
            <person name="Dalla E."/>
            <person name="Dalrymple B.P."/>
            <person name="de Bono B."/>
            <person name="Della Gatta G."/>
            <person name="di Bernardo D."/>
            <person name="Down T."/>
            <person name="Engstrom P."/>
            <person name="Fagiolini M."/>
            <person name="Faulkner G."/>
            <person name="Fletcher C.F."/>
            <person name="Fukushima T."/>
            <person name="Furuno M."/>
            <person name="Futaki S."/>
            <person name="Gariboldi M."/>
            <person name="Georgii-Hemming P."/>
            <person name="Gingeras T.R."/>
            <person name="Gojobori T."/>
            <person name="Green R.E."/>
            <person name="Gustincich S."/>
            <person name="Harbers M."/>
            <person name="Hayashi Y."/>
            <person name="Hensch T.K."/>
            <person name="Hirokawa N."/>
            <person name="Hill D."/>
            <person name="Huminiecki L."/>
            <person name="Iacono M."/>
            <person name="Ikeo K."/>
            <person name="Iwama A."/>
            <person name="Ishikawa T."/>
            <person name="Jakt M."/>
            <person name="Kanapin A."/>
            <person name="Katoh M."/>
            <person name="Kawasawa Y."/>
            <person name="Kelso J."/>
            <person name="Kitamura H."/>
            <person name="Kitano H."/>
            <person name="Kollias G."/>
            <person name="Krishnan S.P."/>
            <person name="Kruger A."/>
            <person name="Kummerfeld S.K."/>
            <person name="Kurochkin I.V."/>
            <person name="Lareau L.F."/>
            <person name="Lazarevic D."/>
            <person name="Lipovich L."/>
            <person name="Liu J."/>
            <person name="Liuni S."/>
            <person name="McWilliam S."/>
            <person name="Madan Babu M."/>
            <person name="Madera M."/>
            <person name="Marchionni L."/>
            <person name="Matsuda H."/>
            <person name="Matsuzawa S."/>
            <person name="Miki H."/>
            <person name="Mignone F."/>
            <person name="Miyake S."/>
            <person name="Morris K."/>
            <person name="Mottagui-Tabar S."/>
            <person name="Mulder N."/>
            <person name="Nakano N."/>
            <person name="Nakauchi H."/>
            <person name="Ng P."/>
            <person name="Nilsson R."/>
            <person name="Nishiguchi S."/>
            <person name="Nishikawa S."/>
            <person name="Nori F."/>
            <person name="Ohara O."/>
            <person name="Okazaki Y."/>
            <person name="Orlando V."/>
            <person name="Pang K.C."/>
            <person name="Pavan W.J."/>
            <person name="Pavesi G."/>
            <person name="Pesole G."/>
            <person name="Petrovsky N."/>
            <person name="Piazza S."/>
            <person name="Reed J."/>
            <person name="Reid J.F."/>
            <person name="Ring B.Z."/>
            <person name="Ringwald M."/>
            <person name="Rost B."/>
            <person name="Ruan Y."/>
            <person name="Salzberg S.L."/>
            <person name="Sandelin A."/>
            <person name="Schneider C."/>
            <person name="Schoenbach C."/>
            <person name="Sekiguchi K."/>
            <person name="Semple C.A."/>
            <person name="Seno S."/>
            <person name="Sessa L."/>
            <person name="Sheng Y."/>
            <person name="Shibata Y."/>
            <person name="Shimada H."/>
            <person name="Shimada K."/>
            <person name="Silva D."/>
            <person name="Sinclair B."/>
            <person name="Sperling S."/>
            <person name="Stupka E."/>
            <person name="Sugiura K."/>
            <person name="Sultana R."/>
            <person name="Takenaka Y."/>
            <person name="Taki K."/>
            <person name="Tammoja K."/>
            <person name="Tan S.L."/>
            <person name="Tang S."/>
            <person name="Taylor M.S."/>
            <person name="Tegner J."/>
            <person name="Teichmann S.A."/>
            <person name="Ueda H.R."/>
            <person name="van Nimwegen E."/>
            <person name="Verardo R."/>
            <person name="Wei C.L."/>
            <person name="Yagi K."/>
            <person name="Yamanishi H."/>
            <person name="Zabarovsky E."/>
            <person name="Zhu S."/>
            <person name="Zimmer A."/>
            <person name="Hide W."/>
            <person name="Bult C."/>
            <person name="Grimmond S.M."/>
            <person name="Teasdale R.D."/>
            <person name="Liu E.T."/>
            <person name="Brusic V."/>
            <person name="Quackenbush J."/>
            <person name="Wahlestedt C."/>
            <person name="Mattick J.S."/>
            <person name="Hume D.A."/>
            <person name="Kai C."/>
            <person name="Sasaki D."/>
            <person name="Tomaru Y."/>
            <person name="Fukuda S."/>
            <person name="Kanamori-Katayama M."/>
            <person name="Suzuki M."/>
            <person name="Aoki J."/>
            <person name="Arakawa T."/>
            <person name="Iida J."/>
            <person name="Imamura K."/>
            <person name="Itoh M."/>
            <person name="Kato T."/>
            <person name="Kawaji H."/>
            <person name="Kawagashira N."/>
            <person name="Kawashima T."/>
            <person name="Kojima M."/>
            <person name="Kondo S."/>
            <person name="Konno H."/>
            <person name="Nakano K."/>
            <person name="Ninomiya N."/>
            <person name="Nishio T."/>
            <person name="Okada M."/>
            <person name="Plessy C."/>
            <person name="Shibata K."/>
            <person name="Shiraki T."/>
            <person name="Suzuki S."/>
            <person name="Tagami M."/>
            <person name="Waki K."/>
            <person name="Watahiki A."/>
            <person name="Okamura-Oho Y."/>
            <person name="Suzuki H."/>
            <person name="Kawai J."/>
            <person name="Hayashizaki Y."/>
        </authorList>
    </citation>
    <scope>NUCLEOTIDE SEQUENCE [LARGE SCALE MRNA] (ISOFORM 2)</scope>
    <scope>NUCLEOTIDE SEQUENCE [LARGE SCALE MRNA] OF 175-1404 (ISOFORM 1)</scope>
    <source>
        <strain>NOD</strain>
    </source>
</reference>
<reference key="3">
    <citation type="journal article" date="2009" name="PLoS Biol.">
        <title>Lineage-specific biology revealed by a finished genome assembly of the mouse.</title>
        <authorList>
            <person name="Church D.M."/>
            <person name="Goodstadt L."/>
            <person name="Hillier L.W."/>
            <person name="Zody M.C."/>
            <person name="Goldstein S."/>
            <person name="She X."/>
            <person name="Bult C.J."/>
            <person name="Agarwala R."/>
            <person name="Cherry J.L."/>
            <person name="DiCuccio M."/>
            <person name="Hlavina W."/>
            <person name="Kapustin Y."/>
            <person name="Meric P."/>
            <person name="Maglott D."/>
            <person name="Birtle Z."/>
            <person name="Marques A.C."/>
            <person name="Graves T."/>
            <person name="Zhou S."/>
            <person name="Teague B."/>
            <person name="Potamousis K."/>
            <person name="Churas C."/>
            <person name="Place M."/>
            <person name="Herschleb J."/>
            <person name="Runnheim R."/>
            <person name="Forrest D."/>
            <person name="Amos-Landgraf J."/>
            <person name="Schwartz D.C."/>
            <person name="Cheng Z."/>
            <person name="Lindblad-Toh K."/>
            <person name="Eichler E.E."/>
            <person name="Ponting C.P."/>
        </authorList>
    </citation>
    <scope>NUCLEOTIDE SEQUENCE [LARGE SCALE GENOMIC DNA]</scope>
    <source>
        <strain>C57BL/6J</strain>
    </source>
</reference>
<reference key="4">
    <citation type="journal article" date="2004" name="Genome Res.">
        <title>The status, quality, and expansion of the NIH full-length cDNA project: the Mammalian Gene Collection (MGC).</title>
        <authorList>
            <consortium name="The MGC Project Team"/>
        </authorList>
    </citation>
    <scope>NUCLEOTIDE SEQUENCE [LARGE SCALE MRNA] (ISOFORM 1)</scope>
    <scope>NUCLEOTIDE SEQUENCE [LARGE SCALE MRNA] OF 756-1404 (ISOFORM 3)</scope>
    <source>
        <strain>C57BL/6J</strain>
        <strain>FVB/N</strain>
        <tissue>Brain</tissue>
        <tissue>Eye</tissue>
        <tissue>Liver</tissue>
    </source>
</reference>
<reference key="5">
    <citation type="journal article" date="2010" name="Cell">
        <title>A tissue-specific atlas of mouse protein phosphorylation and expression.</title>
        <authorList>
            <person name="Huttlin E.L."/>
            <person name="Jedrychowski M.P."/>
            <person name="Elias J.E."/>
            <person name="Goswami T."/>
            <person name="Rad R."/>
            <person name="Beausoleil S.A."/>
            <person name="Villen J."/>
            <person name="Haas W."/>
            <person name="Sowa M.E."/>
            <person name="Gygi S.P."/>
        </authorList>
    </citation>
    <scope>PHOSPHORYLATION [LARGE SCALE ANALYSIS] AT SER-51; SER-617; SER-1144 AND SER-1145</scope>
    <scope>IDENTIFICATION BY MASS SPECTROMETRY [LARGE SCALE ANALYSIS]</scope>
    <source>
        <tissue>Lung</tissue>
        <tissue>Spleen</tissue>
    </source>
</reference>
<reference key="6">
    <citation type="journal article" date="2011" name="Cell Res.">
        <title>Coordinate activation of inflammatory gene networks, alveolar destruction and neonatal death in AKNA deficient mice.</title>
        <authorList>
            <person name="Ma W."/>
            <person name="Ortiz-Quintero B."/>
            <person name="Rangel R."/>
            <person name="McKeller M.R."/>
            <person name="Herrera-Rodriguez S."/>
            <person name="Castillo E.F."/>
            <person name="Schluns K.S."/>
            <person name="Hall M."/>
            <person name="Zhang H."/>
            <person name="Suh W.K."/>
            <person name="Okada H."/>
            <person name="Mak T.W."/>
            <person name="Zhou Y."/>
            <person name="Blackburn M.R."/>
            <person name="Martinez-Valdez H."/>
        </authorList>
    </citation>
    <scope>DISRUPTION PHENOTYPE</scope>
</reference>
<reference key="7">
    <citation type="journal article" date="2019" name="Nature">
        <title>The centrosome protein AKNA regulates neurogenesis via microtubule organization.</title>
        <authorList>
            <person name="Camargo Ortega G."/>
            <person name="Falk S."/>
            <person name="Johansson P.A."/>
            <person name="Peyre E."/>
            <person name="Broix L."/>
            <person name="Sahu S.K."/>
            <person name="Hirst W."/>
            <person name="Schlichthaerle T."/>
            <person name="De Juan Romero C."/>
            <person name="Draganova K."/>
            <person name="Vinopal S."/>
            <person name="Chinnappa K."/>
            <person name="Gavranovic A."/>
            <person name="Karakaya T."/>
            <person name="Steininger T."/>
            <person name="Merl-Pham J."/>
            <person name="Feederle R."/>
            <person name="Shao W."/>
            <person name="Shi S.H."/>
            <person name="Hauck S.M."/>
            <person name="Jungmann R."/>
            <person name="Bradke F."/>
            <person name="Borrell V."/>
            <person name="Geerlof A."/>
            <person name="Reber S."/>
            <person name="Tiwari V.K."/>
            <person name="Huttner W.B."/>
            <person name="Wilsch-Braeuninger M."/>
            <person name="Nguyen L."/>
            <person name="Goetz M."/>
        </authorList>
    </citation>
    <scope>FUNCTION</scope>
    <scope>SUBCELLULAR LOCATION</scope>
    <scope>PHOSPHORYLATION</scope>
    <scope>TISSUE SPECIFICITY</scope>
    <scope>DEVELOPMENTAL STAGE</scope>
    <scope>INTERACTION WITH DCTN1; MAPRE1; ODF2 AND CAMSAP3</scope>
</reference>
<accession>Q80VW7</accession>
<accession>Q3TC64</accession>
<accession>Q3TDM3</accession>
<accession>Q3U3N4</accession>
<accession>Q6ZPF9</accession>
<accession>Q8CFV0</accession>
<accession>Q8R114</accession>
<gene>
    <name evidence="9" type="primary">Akna</name>
    <name evidence="5" type="synonym">Kiaa1968</name>
</gene>
<organism>
    <name type="scientific">Mus musculus</name>
    <name type="common">Mouse</name>
    <dbReference type="NCBI Taxonomy" id="10090"/>
    <lineage>
        <taxon>Eukaryota</taxon>
        <taxon>Metazoa</taxon>
        <taxon>Chordata</taxon>
        <taxon>Craniata</taxon>
        <taxon>Vertebrata</taxon>
        <taxon>Euteleostomi</taxon>
        <taxon>Mammalia</taxon>
        <taxon>Eutheria</taxon>
        <taxon>Euarchontoglires</taxon>
        <taxon>Glires</taxon>
        <taxon>Rodentia</taxon>
        <taxon>Myomorpha</taxon>
        <taxon>Muroidea</taxon>
        <taxon>Muridae</taxon>
        <taxon>Murinae</taxon>
        <taxon>Mus</taxon>
        <taxon>Mus</taxon>
    </lineage>
</organism>
<name>AKNA_MOUSE</name>